<evidence type="ECO:0000255" key="1">
    <source>
        <dbReference type="HAMAP-Rule" id="MF_01197"/>
    </source>
</evidence>
<dbReference type="EMBL" id="AM180355">
    <property type="protein sequence ID" value="CAJ69508.1"/>
    <property type="molecule type" value="Genomic_DNA"/>
</dbReference>
<dbReference type="RefSeq" id="WP_003416162.1">
    <property type="nucleotide sequence ID" value="NZ_JAUPES010000012.1"/>
</dbReference>
<dbReference type="RefSeq" id="YP_001089133.1">
    <property type="nucleotide sequence ID" value="NC_009089.1"/>
</dbReference>
<dbReference type="SMR" id="Q182V6"/>
<dbReference type="STRING" id="272563.CD630_26220"/>
<dbReference type="EnsemblBacteria" id="CAJ69508">
    <property type="protein sequence ID" value="CAJ69508"/>
    <property type="gene ID" value="CD630_26220"/>
</dbReference>
<dbReference type="KEGG" id="cdf:CD630_26220"/>
<dbReference type="KEGG" id="pdc:CDIF630_02876"/>
<dbReference type="PATRIC" id="fig|272563.120.peg.2765"/>
<dbReference type="eggNOG" id="COG1799">
    <property type="taxonomic scope" value="Bacteria"/>
</dbReference>
<dbReference type="OrthoDB" id="9815206at2"/>
<dbReference type="PhylomeDB" id="Q182V6"/>
<dbReference type="BioCyc" id="PDIF272563:G12WB-2773-MONOMER"/>
<dbReference type="Proteomes" id="UP000001978">
    <property type="component" value="Chromosome"/>
</dbReference>
<dbReference type="GO" id="GO:0005737">
    <property type="term" value="C:cytoplasm"/>
    <property type="evidence" value="ECO:0007669"/>
    <property type="project" value="UniProtKB-SubCell"/>
</dbReference>
<dbReference type="GO" id="GO:0000917">
    <property type="term" value="P:division septum assembly"/>
    <property type="evidence" value="ECO:0007669"/>
    <property type="project" value="UniProtKB-KW"/>
</dbReference>
<dbReference type="GO" id="GO:0043093">
    <property type="term" value="P:FtsZ-dependent cytokinesis"/>
    <property type="evidence" value="ECO:0007669"/>
    <property type="project" value="UniProtKB-UniRule"/>
</dbReference>
<dbReference type="Gene3D" id="3.30.110.150">
    <property type="entry name" value="SepF-like protein"/>
    <property type="match status" value="1"/>
</dbReference>
<dbReference type="HAMAP" id="MF_01197">
    <property type="entry name" value="SepF"/>
    <property type="match status" value="1"/>
</dbReference>
<dbReference type="InterPro" id="IPR023052">
    <property type="entry name" value="Cell_div_SepF"/>
</dbReference>
<dbReference type="InterPro" id="IPR007561">
    <property type="entry name" value="Cell_div_SepF/SepF-rel"/>
</dbReference>
<dbReference type="InterPro" id="IPR038594">
    <property type="entry name" value="SepF-like_sf"/>
</dbReference>
<dbReference type="PANTHER" id="PTHR35798">
    <property type="entry name" value="CELL DIVISION PROTEIN SEPF"/>
    <property type="match status" value="1"/>
</dbReference>
<dbReference type="PANTHER" id="PTHR35798:SF1">
    <property type="entry name" value="CELL DIVISION PROTEIN SEPF"/>
    <property type="match status" value="1"/>
</dbReference>
<dbReference type="Pfam" id="PF04472">
    <property type="entry name" value="SepF"/>
    <property type="match status" value="1"/>
</dbReference>
<sequence>MSNGIISKFKNWIVDEEEDYIEDEYESGMDDIVQEEEMNSGFSTAKANKIVNLHTTSQMKVVIVEPKVYDEAATIADHLKQRRAVIVNLEGLTNSEVRKSIFNFMNGAVYVLDGSIQKVSKSIFILAPNNVDIDANMKKELESKAFFPWQNK</sequence>
<gene>
    <name evidence="1" type="primary">sepF</name>
    <name type="ordered locus">CD630_26220</name>
</gene>
<name>SEPF_CLOD6</name>
<reference key="1">
    <citation type="journal article" date="2006" name="Nat. Genet.">
        <title>The multidrug-resistant human pathogen Clostridium difficile has a highly mobile, mosaic genome.</title>
        <authorList>
            <person name="Sebaihia M."/>
            <person name="Wren B.W."/>
            <person name="Mullany P."/>
            <person name="Fairweather N.F."/>
            <person name="Minton N."/>
            <person name="Stabler R."/>
            <person name="Thomson N.R."/>
            <person name="Roberts A.P."/>
            <person name="Cerdeno-Tarraga A.M."/>
            <person name="Wang H."/>
            <person name="Holden M.T.G."/>
            <person name="Wright A."/>
            <person name="Churcher C."/>
            <person name="Quail M.A."/>
            <person name="Baker S."/>
            <person name="Bason N."/>
            <person name="Brooks K."/>
            <person name="Chillingworth T."/>
            <person name="Cronin A."/>
            <person name="Davis P."/>
            <person name="Dowd L."/>
            <person name="Fraser A."/>
            <person name="Feltwell T."/>
            <person name="Hance Z."/>
            <person name="Holroyd S."/>
            <person name="Jagels K."/>
            <person name="Moule S."/>
            <person name="Mungall K."/>
            <person name="Price C."/>
            <person name="Rabbinowitsch E."/>
            <person name="Sharp S."/>
            <person name="Simmonds M."/>
            <person name="Stevens K."/>
            <person name="Unwin L."/>
            <person name="Whithead S."/>
            <person name="Dupuy B."/>
            <person name="Dougan G."/>
            <person name="Barrell B."/>
            <person name="Parkhill J."/>
        </authorList>
    </citation>
    <scope>NUCLEOTIDE SEQUENCE [LARGE SCALE GENOMIC DNA]</scope>
    <source>
        <strain>630</strain>
    </source>
</reference>
<accession>Q182V6</accession>
<comment type="function">
    <text evidence="1">Cell division protein that is part of the divisome complex and is recruited early to the Z-ring. Probably stimulates Z-ring formation, perhaps through the cross-linking of FtsZ protofilaments. Its function overlaps with FtsA.</text>
</comment>
<comment type="subunit">
    <text evidence="1">Homodimer. Interacts with FtsZ.</text>
</comment>
<comment type="subcellular location">
    <subcellularLocation>
        <location evidence="1">Cytoplasm</location>
    </subcellularLocation>
    <text evidence="1">Localizes to the division site, in a FtsZ-dependent manner.</text>
</comment>
<comment type="similarity">
    <text evidence="1">Belongs to the SepF family.</text>
</comment>
<feature type="chain" id="PRO_0000333997" description="Cell division protein SepF">
    <location>
        <begin position="1"/>
        <end position="152"/>
    </location>
</feature>
<protein>
    <recommendedName>
        <fullName evidence="1">Cell division protein SepF</fullName>
    </recommendedName>
</protein>
<proteinExistence type="inferred from homology"/>
<keyword id="KW-0131">Cell cycle</keyword>
<keyword id="KW-0132">Cell division</keyword>
<keyword id="KW-0963">Cytoplasm</keyword>
<keyword id="KW-1185">Reference proteome</keyword>
<keyword id="KW-0717">Septation</keyword>
<organism>
    <name type="scientific">Clostridioides difficile (strain 630)</name>
    <name type="common">Peptoclostridium difficile</name>
    <dbReference type="NCBI Taxonomy" id="272563"/>
    <lineage>
        <taxon>Bacteria</taxon>
        <taxon>Bacillati</taxon>
        <taxon>Bacillota</taxon>
        <taxon>Clostridia</taxon>
        <taxon>Peptostreptococcales</taxon>
        <taxon>Peptostreptococcaceae</taxon>
        <taxon>Clostridioides</taxon>
    </lineage>
</organism>